<comment type="catalytic activity">
    <reaction>
        <text>[thioredoxin]-dithiol + NADP(+) = [thioredoxin]-disulfide + NADPH + H(+)</text>
        <dbReference type="Rhea" id="RHEA:20345"/>
        <dbReference type="Rhea" id="RHEA-COMP:10698"/>
        <dbReference type="Rhea" id="RHEA-COMP:10700"/>
        <dbReference type="ChEBI" id="CHEBI:15378"/>
        <dbReference type="ChEBI" id="CHEBI:29950"/>
        <dbReference type="ChEBI" id="CHEBI:50058"/>
        <dbReference type="ChEBI" id="CHEBI:57783"/>
        <dbReference type="ChEBI" id="CHEBI:58349"/>
        <dbReference type="EC" id="1.8.1.9"/>
    </reaction>
</comment>
<comment type="cofactor">
    <cofactor evidence="1">
        <name>FAD</name>
        <dbReference type="ChEBI" id="CHEBI:57692"/>
    </cofactor>
    <text evidence="1">Binds 1 FAD per subunit.</text>
</comment>
<comment type="subunit">
    <text evidence="1">Homodimer.</text>
</comment>
<comment type="subcellular location">
    <subcellularLocation>
        <location>Cytoplasm</location>
    </subcellularLocation>
</comment>
<comment type="miscellaneous">
    <text>The active site is a redox-active disulfide bond.</text>
</comment>
<comment type="similarity">
    <text evidence="2">Belongs to the class-II pyridine nucleotide-disulfide oxidoreductase family.</text>
</comment>
<evidence type="ECO:0000250" key="1">
    <source>
        <dbReference type="UniProtKB" id="P0A9P4"/>
    </source>
</evidence>
<evidence type="ECO:0000305" key="2"/>
<keyword id="KW-0963">Cytoplasm</keyword>
<keyword id="KW-1015">Disulfide bond</keyword>
<keyword id="KW-0274">FAD</keyword>
<keyword id="KW-0285">Flavoprotein</keyword>
<keyword id="KW-0521">NADP</keyword>
<keyword id="KW-0560">Oxidoreductase</keyword>
<keyword id="KW-0676">Redox-active center</keyword>
<protein>
    <recommendedName>
        <fullName>Thioredoxin reductase</fullName>
        <shortName>TRXR</shortName>
        <ecNumber>1.8.1.9</ecNumber>
    </recommendedName>
</protein>
<organism>
    <name type="scientific">Buchnera aphidicola subsp. Schizaphis graminum (strain Sg)</name>
    <dbReference type="NCBI Taxonomy" id="198804"/>
    <lineage>
        <taxon>Bacteria</taxon>
        <taxon>Pseudomonadati</taxon>
        <taxon>Pseudomonadota</taxon>
        <taxon>Gammaproteobacteria</taxon>
        <taxon>Enterobacterales</taxon>
        <taxon>Erwiniaceae</taxon>
        <taxon>Buchnera</taxon>
    </lineage>
</organism>
<sequence length="319" mass="35543">MELKNHKKIIILGSGPAGYTAAIYSSRANLNPLLITGINKGGQLMNTNEIENWPGDFKKITGPELMNRMHEHSLKFKTEIVYDNIISVEFKKKPFFLLGEYNKYTCDAVIIATGANPRYLGLSSENKFKGKGISTCAVCDGFFYKNKEIAVVGGGNTAIEETLYLSNFVKKIYLIHRRNNFKAEKILIDRLLKIVKTKKVILHLNSTIEDILGNNKGVTHLLIKNKNLKEKKKLKIAVSGLFVAIGYIPNTDIFTDQLKMKDGYIKIKKGTHGNYTQTNIPGVFAAGDVIDHVYRQAITSSASGCMAALDSERYLNSLS</sequence>
<proteinExistence type="inferred from homology"/>
<accession>P81433</accession>
<dbReference type="EC" id="1.8.1.9"/>
<dbReference type="EMBL" id="L43549">
    <property type="protein sequence ID" value="AAC05433.1"/>
    <property type="molecule type" value="Genomic_DNA"/>
</dbReference>
<dbReference type="EMBL" id="AE013218">
    <property type="protein sequence ID" value="AAM67858.1"/>
    <property type="molecule type" value="Genomic_DNA"/>
</dbReference>
<dbReference type="RefSeq" id="WP_011053825.1">
    <property type="nucleotide sequence ID" value="NC_004061.1"/>
</dbReference>
<dbReference type="SMR" id="P81433"/>
<dbReference type="STRING" id="198804.BUsg_304"/>
<dbReference type="GeneID" id="93003773"/>
<dbReference type="KEGG" id="bas:BUsg_304"/>
<dbReference type="eggNOG" id="COG0492">
    <property type="taxonomic scope" value="Bacteria"/>
</dbReference>
<dbReference type="HOGENOM" id="CLU_031864_5_1_6"/>
<dbReference type="Proteomes" id="UP000000416">
    <property type="component" value="Chromosome"/>
</dbReference>
<dbReference type="GO" id="GO:0005737">
    <property type="term" value="C:cytoplasm"/>
    <property type="evidence" value="ECO:0007669"/>
    <property type="project" value="UniProtKB-SubCell"/>
</dbReference>
<dbReference type="GO" id="GO:0004791">
    <property type="term" value="F:thioredoxin-disulfide reductase (NADPH) activity"/>
    <property type="evidence" value="ECO:0007669"/>
    <property type="project" value="UniProtKB-EC"/>
</dbReference>
<dbReference type="GO" id="GO:0019430">
    <property type="term" value="P:removal of superoxide radicals"/>
    <property type="evidence" value="ECO:0007669"/>
    <property type="project" value="InterPro"/>
</dbReference>
<dbReference type="Gene3D" id="3.50.50.60">
    <property type="entry name" value="FAD/NAD(P)-binding domain"/>
    <property type="match status" value="2"/>
</dbReference>
<dbReference type="InterPro" id="IPR036188">
    <property type="entry name" value="FAD/NAD-bd_sf"/>
</dbReference>
<dbReference type="InterPro" id="IPR023753">
    <property type="entry name" value="FAD/NAD-binding_dom"/>
</dbReference>
<dbReference type="InterPro" id="IPR050097">
    <property type="entry name" value="Ferredoxin-NADP_redctase_2"/>
</dbReference>
<dbReference type="InterPro" id="IPR008255">
    <property type="entry name" value="Pyr_nucl-diS_OxRdtase_2_AS"/>
</dbReference>
<dbReference type="InterPro" id="IPR005982">
    <property type="entry name" value="Thioredox_Rdtase"/>
</dbReference>
<dbReference type="NCBIfam" id="TIGR01292">
    <property type="entry name" value="TRX_reduct"/>
    <property type="match status" value="1"/>
</dbReference>
<dbReference type="PANTHER" id="PTHR48105">
    <property type="entry name" value="THIOREDOXIN REDUCTASE 1-RELATED-RELATED"/>
    <property type="match status" value="1"/>
</dbReference>
<dbReference type="Pfam" id="PF07992">
    <property type="entry name" value="Pyr_redox_2"/>
    <property type="match status" value="1"/>
</dbReference>
<dbReference type="PRINTS" id="PR00368">
    <property type="entry name" value="FADPNR"/>
</dbReference>
<dbReference type="PRINTS" id="PR00469">
    <property type="entry name" value="PNDRDTASEII"/>
</dbReference>
<dbReference type="SUPFAM" id="SSF51905">
    <property type="entry name" value="FAD/NAD(P)-binding domain"/>
    <property type="match status" value="1"/>
</dbReference>
<dbReference type="PROSITE" id="PS00573">
    <property type="entry name" value="PYRIDINE_REDOX_2"/>
    <property type="match status" value="1"/>
</dbReference>
<reference key="1">
    <citation type="journal article" date="1997" name="Curr. Microbiol.">
        <title>Nucleotide sequence of a DNA fragment from Buchnera aphidicola (Aphid endosymbiont) containing the genes aspS-trxB-serS-serC-aroA-rpsA-himD-tpiA.</title>
        <authorList>
            <person name="Thao M.L."/>
            <person name="Baumann P."/>
        </authorList>
    </citation>
    <scope>NUCLEOTIDE SEQUENCE [GENOMIC DNA]</scope>
</reference>
<reference key="2">
    <citation type="journal article" date="2002" name="Science">
        <title>50 million years of genomic stasis in endosymbiotic bacteria.</title>
        <authorList>
            <person name="Tamas I."/>
            <person name="Klasson L."/>
            <person name="Canbaeck B."/>
            <person name="Naeslund A.K."/>
            <person name="Eriksson A.-S."/>
            <person name="Wernegreen J.J."/>
            <person name="Sandstroem J.P."/>
            <person name="Moran N.A."/>
            <person name="Andersson S.G.E."/>
        </authorList>
    </citation>
    <scope>NUCLEOTIDE SEQUENCE [LARGE SCALE GENOMIC DNA]</scope>
    <source>
        <strain>Sg</strain>
    </source>
</reference>
<gene>
    <name type="primary">trxB</name>
    <name type="ordered locus">BUsg_304</name>
</gene>
<name>TRXB_BUCAP</name>
<feature type="chain" id="PRO_0000166722" description="Thioredoxin reductase">
    <location>
        <begin position="1"/>
        <end position="319"/>
    </location>
</feature>
<feature type="binding site" evidence="1">
    <location>
        <begin position="36"/>
        <end position="43"/>
    </location>
    <ligand>
        <name>FAD</name>
        <dbReference type="ChEBI" id="CHEBI:57692"/>
    </ligand>
</feature>
<feature type="binding site" evidence="1">
    <location>
        <begin position="288"/>
        <end position="297"/>
    </location>
    <ligand>
        <name>FAD</name>
        <dbReference type="ChEBI" id="CHEBI:57692"/>
    </ligand>
</feature>
<feature type="disulfide bond" description="Redox-active" evidence="1">
    <location>
        <begin position="136"/>
        <end position="139"/>
    </location>
</feature>